<comment type="similarity">
    <text evidence="1">Belongs to the UPF0398 family.</text>
</comment>
<proteinExistence type="inferred from homology"/>
<organism>
    <name type="scientific">Staphylococcus aureus (strain N315)</name>
    <dbReference type="NCBI Taxonomy" id="158879"/>
    <lineage>
        <taxon>Bacteria</taxon>
        <taxon>Bacillati</taxon>
        <taxon>Bacillota</taxon>
        <taxon>Bacilli</taxon>
        <taxon>Bacillales</taxon>
        <taxon>Staphylococcaceae</taxon>
        <taxon>Staphylococcus</taxon>
    </lineage>
</organism>
<gene>
    <name type="ordered locus">SA1280</name>
</gene>
<protein>
    <recommendedName>
        <fullName evidence="1">UPF0398 protein SA1280</fullName>
    </recommendedName>
</protein>
<sequence length="187" mass="22191">MVKTVYVTGYKSFELNIFKDDAPEVHYLKQFIKHKIEQLLDEGLEWVLIQGQMGIELWTAEVVIELQRTYDSLKFAVITPFQGHTEKWNEHNQSKYANIIKHADYVDSIFHTSYQGPFQFKQADQFMLEHSDQTLLIYDEEQEASPKFFKQMLVDFMDKTNYTCDIVTFDELTAFINDLQWSEDQSF</sequence>
<dbReference type="EMBL" id="BA000018">
    <property type="protein sequence ID" value="BAB42540.1"/>
    <property type="molecule type" value="Genomic_DNA"/>
</dbReference>
<dbReference type="PIR" id="G89922">
    <property type="entry name" value="G89922"/>
</dbReference>
<dbReference type="RefSeq" id="WP_000241308.1">
    <property type="nucleotide sequence ID" value="NC_002745.2"/>
</dbReference>
<dbReference type="SMR" id="Q7A5L0"/>
<dbReference type="EnsemblBacteria" id="BAB42540">
    <property type="protein sequence ID" value="BAB42540"/>
    <property type="gene ID" value="BAB42540"/>
</dbReference>
<dbReference type="KEGG" id="sau:SA1280"/>
<dbReference type="HOGENOM" id="CLU_105319_0_0_9"/>
<dbReference type="Gene3D" id="3.40.50.450">
    <property type="match status" value="1"/>
</dbReference>
<dbReference type="HAMAP" id="MF_01575">
    <property type="entry name" value="UPF0398"/>
    <property type="match status" value="1"/>
</dbReference>
<dbReference type="InterPro" id="IPR010697">
    <property type="entry name" value="YspA"/>
</dbReference>
<dbReference type="NCBIfam" id="NF010181">
    <property type="entry name" value="PRK13660.1"/>
    <property type="match status" value="1"/>
</dbReference>
<dbReference type="PANTHER" id="PTHR38440:SF1">
    <property type="entry name" value="UPF0398 PROTEIN SPR0331"/>
    <property type="match status" value="1"/>
</dbReference>
<dbReference type="PANTHER" id="PTHR38440">
    <property type="entry name" value="UPF0398 PROTEIN YPSA"/>
    <property type="match status" value="1"/>
</dbReference>
<dbReference type="Pfam" id="PF06908">
    <property type="entry name" value="YpsA"/>
    <property type="match status" value="1"/>
</dbReference>
<dbReference type="PIRSF" id="PIRSF021290">
    <property type="entry name" value="DUF1273"/>
    <property type="match status" value="1"/>
</dbReference>
<dbReference type="SUPFAM" id="SSF102405">
    <property type="entry name" value="MCP/YpsA-like"/>
    <property type="match status" value="1"/>
</dbReference>
<name>Y1280_STAAN</name>
<reference key="1">
    <citation type="journal article" date="2001" name="Lancet">
        <title>Whole genome sequencing of meticillin-resistant Staphylococcus aureus.</title>
        <authorList>
            <person name="Kuroda M."/>
            <person name="Ohta T."/>
            <person name="Uchiyama I."/>
            <person name="Baba T."/>
            <person name="Yuzawa H."/>
            <person name="Kobayashi I."/>
            <person name="Cui L."/>
            <person name="Oguchi A."/>
            <person name="Aoki K."/>
            <person name="Nagai Y."/>
            <person name="Lian J.-Q."/>
            <person name="Ito T."/>
            <person name="Kanamori M."/>
            <person name="Matsumaru H."/>
            <person name="Maruyama A."/>
            <person name="Murakami H."/>
            <person name="Hosoyama A."/>
            <person name="Mizutani-Ui Y."/>
            <person name="Takahashi N.K."/>
            <person name="Sawano T."/>
            <person name="Inoue R."/>
            <person name="Kaito C."/>
            <person name="Sekimizu K."/>
            <person name="Hirakawa H."/>
            <person name="Kuhara S."/>
            <person name="Goto S."/>
            <person name="Yabuzaki J."/>
            <person name="Kanehisa M."/>
            <person name="Yamashita A."/>
            <person name="Oshima K."/>
            <person name="Furuya K."/>
            <person name="Yoshino C."/>
            <person name="Shiba T."/>
            <person name="Hattori M."/>
            <person name="Ogasawara N."/>
            <person name="Hayashi H."/>
            <person name="Hiramatsu K."/>
        </authorList>
    </citation>
    <scope>NUCLEOTIDE SEQUENCE [LARGE SCALE GENOMIC DNA]</scope>
    <source>
        <strain>N315</strain>
    </source>
</reference>
<feature type="chain" id="PRO_0000267174" description="UPF0398 protein SA1280">
    <location>
        <begin position="1"/>
        <end position="187"/>
    </location>
</feature>
<accession>Q7A5L0</accession>
<evidence type="ECO:0000255" key="1">
    <source>
        <dbReference type="HAMAP-Rule" id="MF_01575"/>
    </source>
</evidence>